<gene>
    <name evidence="1" type="primary">rpsE</name>
    <name type="ordered locus">Tlet_0596</name>
</gene>
<keyword id="KW-1185">Reference proteome</keyword>
<keyword id="KW-0687">Ribonucleoprotein</keyword>
<keyword id="KW-0689">Ribosomal protein</keyword>
<keyword id="KW-0694">RNA-binding</keyword>
<keyword id="KW-0699">rRNA-binding</keyword>
<proteinExistence type="inferred from homology"/>
<dbReference type="EMBL" id="CP000812">
    <property type="protein sequence ID" value="ABV33162.1"/>
    <property type="molecule type" value="Genomic_DNA"/>
</dbReference>
<dbReference type="RefSeq" id="WP_012002643.1">
    <property type="nucleotide sequence ID" value="NZ_BSDV01000001.1"/>
</dbReference>
<dbReference type="SMR" id="A8F4S8"/>
<dbReference type="STRING" id="416591.Tlet_0596"/>
<dbReference type="KEGG" id="tle:Tlet_0596"/>
<dbReference type="eggNOG" id="COG0098">
    <property type="taxonomic scope" value="Bacteria"/>
</dbReference>
<dbReference type="HOGENOM" id="CLU_065898_2_2_0"/>
<dbReference type="OrthoDB" id="9809045at2"/>
<dbReference type="Proteomes" id="UP000002016">
    <property type="component" value="Chromosome"/>
</dbReference>
<dbReference type="GO" id="GO:0015935">
    <property type="term" value="C:small ribosomal subunit"/>
    <property type="evidence" value="ECO:0007669"/>
    <property type="project" value="InterPro"/>
</dbReference>
<dbReference type="GO" id="GO:0019843">
    <property type="term" value="F:rRNA binding"/>
    <property type="evidence" value="ECO:0007669"/>
    <property type="project" value="UniProtKB-UniRule"/>
</dbReference>
<dbReference type="GO" id="GO:0003735">
    <property type="term" value="F:structural constituent of ribosome"/>
    <property type="evidence" value="ECO:0007669"/>
    <property type="project" value="InterPro"/>
</dbReference>
<dbReference type="GO" id="GO:0006412">
    <property type="term" value="P:translation"/>
    <property type="evidence" value="ECO:0007669"/>
    <property type="project" value="UniProtKB-UniRule"/>
</dbReference>
<dbReference type="FunFam" id="3.30.160.20:FF:000001">
    <property type="entry name" value="30S ribosomal protein S5"/>
    <property type="match status" value="1"/>
</dbReference>
<dbReference type="FunFam" id="3.30.230.10:FF:000002">
    <property type="entry name" value="30S ribosomal protein S5"/>
    <property type="match status" value="1"/>
</dbReference>
<dbReference type="Gene3D" id="3.30.160.20">
    <property type="match status" value="1"/>
</dbReference>
<dbReference type="Gene3D" id="3.30.230.10">
    <property type="match status" value="1"/>
</dbReference>
<dbReference type="HAMAP" id="MF_01307_B">
    <property type="entry name" value="Ribosomal_uS5_B"/>
    <property type="match status" value="1"/>
</dbReference>
<dbReference type="InterPro" id="IPR020568">
    <property type="entry name" value="Ribosomal_Su5_D2-typ_SF"/>
</dbReference>
<dbReference type="InterPro" id="IPR000851">
    <property type="entry name" value="Ribosomal_uS5"/>
</dbReference>
<dbReference type="InterPro" id="IPR005712">
    <property type="entry name" value="Ribosomal_uS5_bac-type"/>
</dbReference>
<dbReference type="InterPro" id="IPR005324">
    <property type="entry name" value="Ribosomal_uS5_C"/>
</dbReference>
<dbReference type="InterPro" id="IPR013810">
    <property type="entry name" value="Ribosomal_uS5_N"/>
</dbReference>
<dbReference type="InterPro" id="IPR018192">
    <property type="entry name" value="Ribosomal_uS5_N_CS"/>
</dbReference>
<dbReference type="InterPro" id="IPR014721">
    <property type="entry name" value="Ribsml_uS5_D2-typ_fold_subgr"/>
</dbReference>
<dbReference type="NCBIfam" id="TIGR01021">
    <property type="entry name" value="rpsE_bact"/>
    <property type="match status" value="1"/>
</dbReference>
<dbReference type="PANTHER" id="PTHR48277">
    <property type="entry name" value="MITOCHONDRIAL RIBOSOMAL PROTEIN S5"/>
    <property type="match status" value="1"/>
</dbReference>
<dbReference type="PANTHER" id="PTHR48277:SF1">
    <property type="entry name" value="MITOCHONDRIAL RIBOSOMAL PROTEIN S5"/>
    <property type="match status" value="1"/>
</dbReference>
<dbReference type="Pfam" id="PF00333">
    <property type="entry name" value="Ribosomal_S5"/>
    <property type="match status" value="1"/>
</dbReference>
<dbReference type="Pfam" id="PF03719">
    <property type="entry name" value="Ribosomal_S5_C"/>
    <property type="match status" value="1"/>
</dbReference>
<dbReference type="SUPFAM" id="SSF54768">
    <property type="entry name" value="dsRNA-binding domain-like"/>
    <property type="match status" value="1"/>
</dbReference>
<dbReference type="SUPFAM" id="SSF54211">
    <property type="entry name" value="Ribosomal protein S5 domain 2-like"/>
    <property type="match status" value="1"/>
</dbReference>
<dbReference type="PROSITE" id="PS00585">
    <property type="entry name" value="RIBOSOMAL_S5"/>
    <property type="match status" value="1"/>
</dbReference>
<dbReference type="PROSITE" id="PS50881">
    <property type="entry name" value="S5_DSRBD"/>
    <property type="match status" value="1"/>
</dbReference>
<name>RS5_PSELT</name>
<sequence>MDEILEEELEKKESEEFEERIVEIRRTAKVTKGGKTLSFRVLAVVGNRKGKVGVGVGKAREVPEAIRKAIAAARASVVEIPLYKTTIPHEVFGRQDASKVLLRPAAPGTGIIAGSTVRAVVELAGVQNVLTKCLGSTASVNLALATLNGLKDLVSPEKAAKLRDITPAQVLYGARKEA</sequence>
<accession>A8F4S8</accession>
<evidence type="ECO:0000255" key="1">
    <source>
        <dbReference type="HAMAP-Rule" id="MF_01307"/>
    </source>
</evidence>
<evidence type="ECO:0000305" key="2"/>
<feature type="chain" id="PRO_0000323222" description="Small ribosomal subunit protein uS5">
    <location>
        <begin position="1"/>
        <end position="178"/>
    </location>
</feature>
<feature type="domain" description="S5 DRBM" evidence="1">
    <location>
        <begin position="17"/>
        <end position="80"/>
    </location>
</feature>
<protein>
    <recommendedName>
        <fullName evidence="1">Small ribosomal subunit protein uS5</fullName>
    </recommendedName>
    <alternativeName>
        <fullName evidence="2">30S ribosomal protein S5</fullName>
    </alternativeName>
</protein>
<organism>
    <name type="scientific">Pseudothermotoga lettingae (strain ATCC BAA-301 / DSM 14385 / NBRC 107922 / TMO)</name>
    <name type="common">Thermotoga lettingae</name>
    <dbReference type="NCBI Taxonomy" id="416591"/>
    <lineage>
        <taxon>Bacteria</taxon>
        <taxon>Thermotogati</taxon>
        <taxon>Thermotogota</taxon>
        <taxon>Thermotogae</taxon>
        <taxon>Thermotogales</taxon>
        <taxon>Thermotogaceae</taxon>
        <taxon>Pseudothermotoga</taxon>
    </lineage>
</organism>
<reference key="1">
    <citation type="submission" date="2007-08" db="EMBL/GenBank/DDBJ databases">
        <title>Complete sequence of Thermotoga lettingae TMO.</title>
        <authorList>
            <consortium name="US DOE Joint Genome Institute"/>
            <person name="Copeland A."/>
            <person name="Lucas S."/>
            <person name="Lapidus A."/>
            <person name="Barry K."/>
            <person name="Glavina del Rio T."/>
            <person name="Dalin E."/>
            <person name="Tice H."/>
            <person name="Pitluck S."/>
            <person name="Foster B."/>
            <person name="Bruce D."/>
            <person name="Schmutz J."/>
            <person name="Larimer F."/>
            <person name="Land M."/>
            <person name="Hauser L."/>
            <person name="Kyrpides N."/>
            <person name="Mikhailova N."/>
            <person name="Nelson K."/>
            <person name="Gogarten J.P."/>
            <person name="Noll K."/>
            <person name="Richardson P."/>
        </authorList>
    </citation>
    <scope>NUCLEOTIDE SEQUENCE [LARGE SCALE GENOMIC DNA]</scope>
    <source>
        <strain>ATCC BAA-301 / DSM 14385 / NBRC 107922 / TMO</strain>
    </source>
</reference>
<comment type="function">
    <text evidence="1">With S4 and S12 plays an important role in translational accuracy.</text>
</comment>
<comment type="function">
    <text evidence="1">Located at the back of the 30S subunit body where it stabilizes the conformation of the head with respect to the body.</text>
</comment>
<comment type="subunit">
    <text evidence="1">Part of the 30S ribosomal subunit. Contacts proteins S4 and S8.</text>
</comment>
<comment type="domain">
    <text>The N-terminal domain interacts with the head of the 30S subunit; the C-terminal domain interacts with the body and contacts protein S4. The interaction surface between S4 and S5 is involved in control of translational fidelity.</text>
</comment>
<comment type="similarity">
    <text evidence="1">Belongs to the universal ribosomal protein uS5 family.</text>
</comment>